<sequence>MSDKTLTRMDLSEAVFREVGLSRNESAQLVESVLQHVSDALASGETVKISSFGTFTVRDKSARIGRNPKTGDEVPISPRRVLTFRPSHLMKERVAAGGKN</sequence>
<comment type="function">
    <text evidence="1">This protein is one of the two subunits of integration host factor, a specific DNA-binding protein that functions in genetic recombination as well as in transcriptional and translational control.</text>
</comment>
<comment type="subunit">
    <text evidence="1">Heterodimer of an alpha and a beta chain.</text>
</comment>
<comment type="similarity">
    <text evidence="1">Belongs to the bacterial histone-like protein family.</text>
</comment>
<proteinExistence type="inferred from homology"/>
<keyword id="KW-0233">DNA recombination</keyword>
<keyword id="KW-0238">DNA-binding</keyword>
<keyword id="KW-0804">Transcription</keyword>
<keyword id="KW-0805">Transcription regulation</keyword>
<keyword id="KW-0810">Translation regulation</keyword>
<reference key="1">
    <citation type="submission" date="2007-04" db="EMBL/GenBank/DDBJ databases">
        <title>Complete sequence of chromosome of Rhodobacter sphaeroides ATCC 17025.</title>
        <authorList>
            <consortium name="US DOE Joint Genome Institute"/>
            <person name="Copeland A."/>
            <person name="Lucas S."/>
            <person name="Lapidus A."/>
            <person name="Barry K."/>
            <person name="Detter J.C."/>
            <person name="Glavina del Rio T."/>
            <person name="Hammon N."/>
            <person name="Israni S."/>
            <person name="Dalin E."/>
            <person name="Tice H."/>
            <person name="Pitluck S."/>
            <person name="Chertkov O."/>
            <person name="Brettin T."/>
            <person name="Bruce D."/>
            <person name="Han C."/>
            <person name="Schmutz J."/>
            <person name="Larimer F."/>
            <person name="Land M."/>
            <person name="Hauser L."/>
            <person name="Kyrpides N."/>
            <person name="Kim E."/>
            <person name="Richardson P."/>
            <person name="Mackenzie C."/>
            <person name="Choudhary M."/>
            <person name="Donohue T.J."/>
            <person name="Kaplan S."/>
        </authorList>
    </citation>
    <scope>NUCLEOTIDE SEQUENCE [LARGE SCALE GENOMIC DNA]</scope>
    <source>
        <strain>ATCC 17025 / ATH 2.4.3</strain>
    </source>
</reference>
<dbReference type="EMBL" id="CP000661">
    <property type="protein sequence ID" value="ABP70804.1"/>
    <property type="molecule type" value="Genomic_DNA"/>
</dbReference>
<dbReference type="SMR" id="A4WTU0"/>
<dbReference type="STRING" id="349102.Rsph17025_1913"/>
<dbReference type="KEGG" id="rsq:Rsph17025_1913"/>
<dbReference type="eggNOG" id="COG0776">
    <property type="taxonomic scope" value="Bacteria"/>
</dbReference>
<dbReference type="HOGENOM" id="CLU_105066_1_1_5"/>
<dbReference type="BioCyc" id="RSPH349102:G1G8M-1978-MONOMER"/>
<dbReference type="GO" id="GO:0005829">
    <property type="term" value="C:cytosol"/>
    <property type="evidence" value="ECO:0007669"/>
    <property type="project" value="TreeGrafter"/>
</dbReference>
<dbReference type="GO" id="GO:0003677">
    <property type="term" value="F:DNA binding"/>
    <property type="evidence" value="ECO:0007669"/>
    <property type="project" value="UniProtKB-UniRule"/>
</dbReference>
<dbReference type="GO" id="GO:0030527">
    <property type="term" value="F:structural constituent of chromatin"/>
    <property type="evidence" value="ECO:0007669"/>
    <property type="project" value="InterPro"/>
</dbReference>
<dbReference type="GO" id="GO:0006310">
    <property type="term" value="P:DNA recombination"/>
    <property type="evidence" value="ECO:0007669"/>
    <property type="project" value="UniProtKB-UniRule"/>
</dbReference>
<dbReference type="GO" id="GO:0009893">
    <property type="term" value="P:positive regulation of metabolic process"/>
    <property type="evidence" value="ECO:0007669"/>
    <property type="project" value="UniProtKB-ARBA"/>
</dbReference>
<dbReference type="GO" id="GO:0006355">
    <property type="term" value="P:regulation of DNA-templated transcription"/>
    <property type="evidence" value="ECO:0007669"/>
    <property type="project" value="UniProtKB-UniRule"/>
</dbReference>
<dbReference type="GO" id="GO:0006417">
    <property type="term" value="P:regulation of translation"/>
    <property type="evidence" value="ECO:0007669"/>
    <property type="project" value="UniProtKB-UniRule"/>
</dbReference>
<dbReference type="CDD" id="cd13835">
    <property type="entry name" value="IHF_A"/>
    <property type="match status" value="1"/>
</dbReference>
<dbReference type="Gene3D" id="4.10.520.10">
    <property type="entry name" value="IHF-like DNA-binding proteins"/>
    <property type="match status" value="1"/>
</dbReference>
<dbReference type="HAMAP" id="MF_00380">
    <property type="entry name" value="IHF_alpha"/>
    <property type="match status" value="1"/>
</dbReference>
<dbReference type="InterPro" id="IPR000119">
    <property type="entry name" value="Hist_DNA-bd"/>
</dbReference>
<dbReference type="InterPro" id="IPR020816">
    <property type="entry name" value="Histone-like_DNA-bd_CS"/>
</dbReference>
<dbReference type="InterPro" id="IPR010992">
    <property type="entry name" value="IHF-like_DNA-bd_dom_sf"/>
</dbReference>
<dbReference type="InterPro" id="IPR005684">
    <property type="entry name" value="IHF_alpha"/>
</dbReference>
<dbReference type="NCBIfam" id="TIGR00987">
    <property type="entry name" value="himA"/>
    <property type="match status" value="1"/>
</dbReference>
<dbReference type="NCBIfam" id="NF001401">
    <property type="entry name" value="PRK00285.1"/>
    <property type="match status" value="1"/>
</dbReference>
<dbReference type="PANTHER" id="PTHR33175">
    <property type="entry name" value="DNA-BINDING PROTEIN HU"/>
    <property type="match status" value="1"/>
</dbReference>
<dbReference type="PANTHER" id="PTHR33175:SF2">
    <property type="entry name" value="INTEGRATION HOST FACTOR SUBUNIT ALPHA"/>
    <property type="match status" value="1"/>
</dbReference>
<dbReference type="Pfam" id="PF00216">
    <property type="entry name" value="Bac_DNA_binding"/>
    <property type="match status" value="1"/>
</dbReference>
<dbReference type="PRINTS" id="PR01727">
    <property type="entry name" value="DNABINDINGHU"/>
</dbReference>
<dbReference type="SMART" id="SM00411">
    <property type="entry name" value="BHL"/>
    <property type="match status" value="1"/>
</dbReference>
<dbReference type="SUPFAM" id="SSF47729">
    <property type="entry name" value="IHF-like DNA-binding proteins"/>
    <property type="match status" value="1"/>
</dbReference>
<dbReference type="PROSITE" id="PS00045">
    <property type="entry name" value="HISTONE_LIKE"/>
    <property type="match status" value="1"/>
</dbReference>
<evidence type="ECO:0000255" key="1">
    <source>
        <dbReference type="HAMAP-Rule" id="MF_00380"/>
    </source>
</evidence>
<organism>
    <name type="scientific">Cereibacter sphaeroides (strain ATCC 17025 / ATH 2.4.3)</name>
    <name type="common">Rhodobacter sphaeroides</name>
    <dbReference type="NCBI Taxonomy" id="349102"/>
    <lineage>
        <taxon>Bacteria</taxon>
        <taxon>Pseudomonadati</taxon>
        <taxon>Pseudomonadota</taxon>
        <taxon>Alphaproteobacteria</taxon>
        <taxon>Rhodobacterales</taxon>
        <taxon>Paracoccaceae</taxon>
        <taxon>Cereibacter</taxon>
    </lineage>
</organism>
<protein>
    <recommendedName>
        <fullName evidence="1">Integration host factor subunit alpha</fullName>
        <shortName evidence="1">IHF-alpha</shortName>
    </recommendedName>
</protein>
<name>IHFA_CERS5</name>
<gene>
    <name evidence="1" type="primary">ihfA</name>
    <name evidence="1" type="synonym">himA</name>
    <name type="ordered locus">Rsph17025_1913</name>
</gene>
<feature type="chain" id="PRO_1000060565" description="Integration host factor subunit alpha">
    <location>
        <begin position="1"/>
        <end position="100"/>
    </location>
</feature>
<accession>A4WTU0</accession>